<gene>
    <name evidence="1" type="primary">uvrB</name>
    <name type="ordered locus">SACOL0823</name>
</gene>
<protein>
    <recommendedName>
        <fullName evidence="1">UvrABC system protein B</fullName>
        <shortName evidence="1">Protein UvrB</shortName>
    </recommendedName>
    <alternativeName>
        <fullName evidence="1">Excinuclease ABC subunit B</fullName>
    </alternativeName>
</protein>
<accession>Q5HHR0</accession>
<name>UVRB_STAAC</name>
<sequence>MTMVEHYPFKIHSDFEPQGDQPQAIKEIVEGIKAGKRHQTLLGATGTGKTFTMSNVIKEVGKPTLIIAHNKTLAGQLYSEFKEFFPENRVEYFVSYYDYYQPEAYVPSTDTFIEKDASINDEIDQLRHSATSALFERDDVIIIASVSCIYGLGNPEEYKDLVVSVRVGMEMDRSELLRKLVDVQYTRNDIDFQRGTFRVRGDVVEIFPASKEELCIRVEFFGDEIDRIREVNYLTGEVLKEREHFAIFPASHFVTREEKLKVAIERIEKELEERLKELRDENKLLEAQRLEQRTNYDLEMMREMGFCSGIENYSVHLTLRPLGSTPYTLLDYFGDDWLVMIDESHVTLPQVRGMYNGDRARKQVLVDHGFRLPSALDNRPLKFEEFEEKTKQLVYVSATPGPYEIEHTDKMVEQIIRPTGLLDPKIEVRPTENQIDDLLSEIQTRVERNERVLVTTLTKKMSEDLTTYMKEAGIKVNYLHSEIKTLERIEIIRDLRMGTYDVIVGINLLREGIDIPEVSLVVILDADKEGFLRSNRSLIQTIGRAARNDKGEVIMYADKMTDSMKYAIDETQRRREIQMKHNEKHGITPKTINKKIHDLISATVENDENNDKAQTVIPKKMTKKERQKTIDNIEKEMKQAAKDLDFEKATELRDMLFELKAEG</sequence>
<organism>
    <name type="scientific">Staphylococcus aureus (strain COL)</name>
    <dbReference type="NCBI Taxonomy" id="93062"/>
    <lineage>
        <taxon>Bacteria</taxon>
        <taxon>Bacillati</taxon>
        <taxon>Bacillota</taxon>
        <taxon>Bacilli</taxon>
        <taxon>Bacillales</taxon>
        <taxon>Staphylococcaceae</taxon>
        <taxon>Staphylococcus</taxon>
    </lineage>
</organism>
<feature type="chain" id="PRO_0000138424" description="UvrABC system protein B">
    <location>
        <begin position="1"/>
        <end position="663"/>
    </location>
</feature>
<feature type="domain" description="Helicase ATP-binding" evidence="1">
    <location>
        <begin position="30"/>
        <end position="417"/>
    </location>
</feature>
<feature type="domain" description="Helicase C-terminal" evidence="1">
    <location>
        <begin position="434"/>
        <end position="600"/>
    </location>
</feature>
<feature type="domain" description="UVR" evidence="1">
    <location>
        <begin position="627"/>
        <end position="662"/>
    </location>
</feature>
<feature type="short sequence motif" description="Beta-hairpin">
    <location>
        <begin position="96"/>
        <end position="119"/>
    </location>
</feature>
<feature type="binding site" evidence="1">
    <location>
        <begin position="43"/>
        <end position="50"/>
    </location>
    <ligand>
        <name>ATP</name>
        <dbReference type="ChEBI" id="CHEBI:30616"/>
    </ligand>
</feature>
<reference key="1">
    <citation type="journal article" date="2005" name="J. Bacteriol.">
        <title>Insights on evolution of virulence and resistance from the complete genome analysis of an early methicillin-resistant Staphylococcus aureus strain and a biofilm-producing methicillin-resistant Staphylococcus epidermidis strain.</title>
        <authorList>
            <person name="Gill S.R."/>
            <person name="Fouts D.E."/>
            <person name="Archer G.L."/>
            <person name="Mongodin E.F."/>
            <person name="DeBoy R.T."/>
            <person name="Ravel J."/>
            <person name="Paulsen I.T."/>
            <person name="Kolonay J.F."/>
            <person name="Brinkac L.M."/>
            <person name="Beanan M.J."/>
            <person name="Dodson R.J."/>
            <person name="Daugherty S.C."/>
            <person name="Madupu R."/>
            <person name="Angiuoli S.V."/>
            <person name="Durkin A.S."/>
            <person name="Haft D.H."/>
            <person name="Vamathevan J.J."/>
            <person name="Khouri H."/>
            <person name="Utterback T.R."/>
            <person name="Lee C."/>
            <person name="Dimitrov G."/>
            <person name="Jiang L."/>
            <person name="Qin H."/>
            <person name="Weidman J."/>
            <person name="Tran K."/>
            <person name="Kang K.H."/>
            <person name="Hance I.R."/>
            <person name="Nelson K.E."/>
            <person name="Fraser C.M."/>
        </authorList>
    </citation>
    <scope>NUCLEOTIDE SEQUENCE [LARGE SCALE GENOMIC DNA]</scope>
    <source>
        <strain>COL</strain>
    </source>
</reference>
<comment type="function">
    <text evidence="1">The UvrABC repair system catalyzes the recognition and processing of DNA lesions. A damage recognition complex composed of 2 UvrA and 2 UvrB subunits scans DNA for abnormalities. Upon binding of the UvrA(2)B(2) complex to a putative damaged site, the DNA wraps around one UvrB monomer. DNA wrap is dependent on ATP binding by UvrB and probably causes local melting of the DNA helix, facilitating insertion of UvrB beta-hairpin between the DNA strands. Then UvrB probes one DNA strand for the presence of a lesion. If a lesion is found the UvrA subunits dissociate and the UvrB-DNA preincision complex is formed. This complex is subsequently bound by UvrC and the second UvrB is released. If no lesion is found, the DNA wraps around the other UvrB subunit that will check the other stand for damage.</text>
</comment>
<comment type="subunit">
    <text evidence="1">Forms a heterotetramer with UvrA during the search for lesions. Interacts with UvrC in an incision complex.</text>
</comment>
<comment type="subcellular location">
    <subcellularLocation>
        <location evidence="1">Cytoplasm</location>
    </subcellularLocation>
</comment>
<comment type="domain">
    <text evidence="1">The beta-hairpin motif is involved in DNA binding.</text>
</comment>
<comment type="similarity">
    <text evidence="1">Belongs to the UvrB family.</text>
</comment>
<proteinExistence type="inferred from homology"/>
<keyword id="KW-0067">ATP-binding</keyword>
<keyword id="KW-0963">Cytoplasm</keyword>
<keyword id="KW-0227">DNA damage</keyword>
<keyword id="KW-0228">DNA excision</keyword>
<keyword id="KW-0234">DNA repair</keyword>
<keyword id="KW-0267">Excision nuclease</keyword>
<keyword id="KW-0547">Nucleotide-binding</keyword>
<keyword id="KW-0742">SOS response</keyword>
<dbReference type="EMBL" id="CP000046">
    <property type="protein sequence ID" value="AAW36379.1"/>
    <property type="molecule type" value="Genomic_DNA"/>
</dbReference>
<dbReference type="SMR" id="Q5HHR0"/>
<dbReference type="KEGG" id="sac:SACOL0823"/>
<dbReference type="HOGENOM" id="CLU_009621_2_1_9"/>
<dbReference type="Proteomes" id="UP000000530">
    <property type="component" value="Chromosome"/>
</dbReference>
<dbReference type="GO" id="GO:0005737">
    <property type="term" value="C:cytoplasm"/>
    <property type="evidence" value="ECO:0007669"/>
    <property type="project" value="UniProtKB-SubCell"/>
</dbReference>
<dbReference type="GO" id="GO:0009380">
    <property type="term" value="C:excinuclease repair complex"/>
    <property type="evidence" value="ECO:0007669"/>
    <property type="project" value="InterPro"/>
</dbReference>
<dbReference type="GO" id="GO:0005524">
    <property type="term" value="F:ATP binding"/>
    <property type="evidence" value="ECO:0007669"/>
    <property type="project" value="UniProtKB-UniRule"/>
</dbReference>
<dbReference type="GO" id="GO:0016887">
    <property type="term" value="F:ATP hydrolysis activity"/>
    <property type="evidence" value="ECO:0007669"/>
    <property type="project" value="InterPro"/>
</dbReference>
<dbReference type="GO" id="GO:0003677">
    <property type="term" value="F:DNA binding"/>
    <property type="evidence" value="ECO:0007669"/>
    <property type="project" value="UniProtKB-UniRule"/>
</dbReference>
<dbReference type="GO" id="GO:0009381">
    <property type="term" value="F:excinuclease ABC activity"/>
    <property type="evidence" value="ECO:0007669"/>
    <property type="project" value="UniProtKB-UniRule"/>
</dbReference>
<dbReference type="GO" id="GO:0006289">
    <property type="term" value="P:nucleotide-excision repair"/>
    <property type="evidence" value="ECO:0007669"/>
    <property type="project" value="UniProtKB-UniRule"/>
</dbReference>
<dbReference type="GO" id="GO:0009432">
    <property type="term" value="P:SOS response"/>
    <property type="evidence" value="ECO:0007669"/>
    <property type="project" value="UniProtKB-UniRule"/>
</dbReference>
<dbReference type="CDD" id="cd17916">
    <property type="entry name" value="DEXHc_UvrB"/>
    <property type="match status" value="1"/>
</dbReference>
<dbReference type="CDD" id="cd18790">
    <property type="entry name" value="SF2_C_UvrB"/>
    <property type="match status" value="1"/>
</dbReference>
<dbReference type="Gene3D" id="3.40.50.300">
    <property type="entry name" value="P-loop containing nucleotide triphosphate hydrolases"/>
    <property type="match status" value="3"/>
</dbReference>
<dbReference type="Gene3D" id="4.10.860.10">
    <property type="entry name" value="UVR domain"/>
    <property type="match status" value="1"/>
</dbReference>
<dbReference type="HAMAP" id="MF_00204">
    <property type="entry name" value="UvrB"/>
    <property type="match status" value="1"/>
</dbReference>
<dbReference type="InterPro" id="IPR006935">
    <property type="entry name" value="Helicase/UvrB_N"/>
</dbReference>
<dbReference type="InterPro" id="IPR014001">
    <property type="entry name" value="Helicase_ATP-bd"/>
</dbReference>
<dbReference type="InterPro" id="IPR001650">
    <property type="entry name" value="Helicase_C-like"/>
</dbReference>
<dbReference type="InterPro" id="IPR027417">
    <property type="entry name" value="P-loop_NTPase"/>
</dbReference>
<dbReference type="InterPro" id="IPR001943">
    <property type="entry name" value="UVR_dom"/>
</dbReference>
<dbReference type="InterPro" id="IPR036876">
    <property type="entry name" value="UVR_dom_sf"/>
</dbReference>
<dbReference type="InterPro" id="IPR004807">
    <property type="entry name" value="UvrB"/>
</dbReference>
<dbReference type="InterPro" id="IPR041471">
    <property type="entry name" value="UvrB_inter"/>
</dbReference>
<dbReference type="InterPro" id="IPR024759">
    <property type="entry name" value="UvrB_YAD/RRR_dom"/>
</dbReference>
<dbReference type="NCBIfam" id="NF003673">
    <property type="entry name" value="PRK05298.1"/>
    <property type="match status" value="1"/>
</dbReference>
<dbReference type="NCBIfam" id="TIGR00631">
    <property type="entry name" value="uvrb"/>
    <property type="match status" value="1"/>
</dbReference>
<dbReference type="PANTHER" id="PTHR24029">
    <property type="entry name" value="UVRABC SYSTEM PROTEIN B"/>
    <property type="match status" value="1"/>
</dbReference>
<dbReference type="PANTHER" id="PTHR24029:SF0">
    <property type="entry name" value="UVRABC SYSTEM PROTEIN B"/>
    <property type="match status" value="1"/>
</dbReference>
<dbReference type="Pfam" id="PF00271">
    <property type="entry name" value="Helicase_C"/>
    <property type="match status" value="1"/>
</dbReference>
<dbReference type="Pfam" id="PF04851">
    <property type="entry name" value="ResIII"/>
    <property type="match status" value="1"/>
</dbReference>
<dbReference type="Pfam" id="PF02151">
    <property type="entry name" value="UVR"/>
    <property type="match status" value="1"/>
</dbReference>
<dbReference type="Pfam" id="PF12344">
    <property type="entry name" value="UvrB"/>
    <property type="match status" value="1"/>
</dbReference>
<dbReference type="Pfam" id="PF17757">
    <property type="entry name" value="UvrB_inter"/>
    <property type="match status" value="1"/>
</dbReference>
<dbReference type="SMART" id="SM00487">
    <property type="entry name" value="DEXDc"/>
    <property type="match status" value="1"/>
</dbReference>
<dbReference type="SMART" id="SM00490">
    <property type="entry name" value="HELICc"/>
    <property type="match status" value="1"/>
</dbReference>
<dbReference type="SUPFAM" id="SSF46600">
    <property type="entry name" value="C-terminal UvrC-binding domain of UvrB"/>
    <property type="match status" value="1"/>
</dbReference>
<dbReference type="SUPFAM" id="SSF52540">
    <property type="entry name" value="P-loop containing nucleoside triphosphate hydrolases"/>
    <property type="match status" value="2"/>
</dbReference>
<dbReference type="PROSITE" id="PS51192">
    <property type="entry name" value="HELICASE_ATP_BIND_1"/>
    <property type="match status" value="1"/>
</dbReference>
<dbReference type="PROSITE" id="PS51194">
    <property type="entry name" value="HELICASE_CTER"/>
    <property type="match status" value="1"/>
</dbReference>
<dbReference type="PROSITE" id="PS50151">
    <property type="entry name" value="UVR"/>
    <property type="match status" value="1"/>
</dbReference>
<evidence type="ECO:0000255" key="1">
    <source>
        <dbReference type="HAMAP-Rule" id="MF_00204"/>
    </source>
</evidence>